<sequence length="61" mass="6915">MAKKSMIAKAARKPKFSVRGYTRCQICGRPHSVYRDFGICRVCLRKMANEGLIPGLKKASW</sequence>
<keyword id="KW-0479">Metal-binding</keyword>
<keyword id="KW-1185">Reference proteome</keyword>
<keyword id="KW-0687">Ribonucleoprotein</keyword>
<keyword id="KW-0689">Ribosomal protein</keyword>
<keyword id="KW-0694">RNA-binding</keyword>
<keyword id="KW-0699">rRNA-binding</keyword>
<keyword id="KW-0862">Zinc</keyword>
<feature type="chain" id="PRO_1000166762" description="Small ribosomal subunit protein uS14">
    <location>
        <begin position="1"/>
        <end position="61"/>
    </location>
</feature>
<feature type="binding site" evidence="1">
    <location>
        <position position="24"/>
    </location>
    <ligand>
        <name>Zn(2+)</name>
        <dbReference type="ChEBI" id="CHEBI:29105"/>
    </ligand>
</feature>
<feature type="binding site" evidence="1">
    <location>
        <position position="27"/>
    </location>
    <ligand>
        <name>Zn(2+)</name>
        <dbReference type="ChEBI" id="CHEBI:29105"/>
    </ligand>
</feature>
<feature type="binding site" evidence="1">
    <location>
        <position position="40"/>
    </location>
    <ligand>
        <name>Zn(2+)</name>
        <dbReference type="ChEBI" id="CHEBI:29105"/>
    </ligand>
</feature>
<feature type="binding site" evidence="1">
    <location>
        <position position="43"/>
    </location>
    <ligand>
        <name>Zn(2+)</name>
        <dbReference type="ChEBI" id="CHEBI:29105"/>
    </ligand>
</feature>
<name>RS14Z_CAMLR</name>
<protein>
    <recommendedName>
        <fullName evidence="1">Small ribosomal subunit protein uS14</fullName>
    </recommendedName>
    <alternativeName>
        <fullName evidence="2">30S ribosomal protein S14 type Z</fullName>
    </alternativeName>
</protein>
<accession>B9KEF3</accession>
<proteinExistence type="inferred from homology"/>
<dbReference type="EMBL" id="CP000932">
    <property type="protein sequence ID" value="ACM63438.1"/>
    <property type="molecule type" value="Genomic_DNA"/>
</dbReference>
<dbReference type="RefSeq" id="WP_012660824.1">
    <property type="nucleotide sequence ID" value="NC_012039.1"/>
</dbReference>
<dbReference type="SMR" id="B9KEF3"/>
<dbReference type="STRING" id="306263.Cla_0072"/>
<dbReference type="KEGG" id="cla:CLA_0072"/>
<dbReference type="eggNOG" id="COG0199">
    <property type="taxonomic scope" value="Bacteria"/>
</dbReference>
<dbReference type="HOGENOM" id="CLU_139869_3_0_7"/>
<dbReference type="Proteomes" id="UP000007727">
    <property type="component" value="Chromosome"/>
</dbReference>
<dbReference type="GO" id="GO:0005737">
    <property type="term" value="C:cytoplasm"/>
    <property type="evidence" value="ECO:0007669"/>
    <property type="project" value="UniProtKB-ARBA"/>
</dbReference>
<dbReference type="GO" id="GO:0015935">
    <property type="term" value="C:small ribosomal subunit"/>
    <property type="evidence" value="ECO:0007669"/>
    <property type="project" value="TreeGrafter"/>
</dbReference>
<dbReference type="GO" id="GO:0019843">
    <property type="term" value="F:rRNA binding"/>
    <property type="evidence" value="ECO:0007669"/>
    <property type="project" value="UniProtKB-UniRule"/>
</dbReference>
<dbReference type="GO" id="GO:0003735">
    <property type="term" value="F:structural constituent of ribosome"/>
    <property type="evidence" value="ECO:0007669"/>
    <property type="project" value="InterPro"/>
</dbReference>
<dbReference type="GO" id="GO:0008270">
    <property type="term" value="F:zinc ion binding"/>
    <property type="evidence" value="ECO:0007669"/>
    <property type="project" value="UniProtKB-UniRule"/>
</dbReference>
<dbReference type="GO" id="GO:0006412">
    <property type="term" value="P:translation"/>
    <property type="evidence" value="ECO:0007669"/>
    <property type="project" value="UniProtKB-UniRule"/>
</dbReference>
<dbReference type="FunFam" id="4.10.830.10:FF:000001">
    <property type="entry name" value="30S ribosomal protein S14 type Z"/>
    <property type="match status" value="1"/>
</dbReference>
<dbReference type="Gene3D" id="4.10.830.10">
    <property type="entry name" value="30s Ribosomal Protein S14, Chain N"/>
    <property type="match status" value="1"/>
</dbReference>
<dbReference type="HAMAP" id="MF_01364_B">
    <property type="entry name" value="Ribosomal_uS14_2_B"/>
    <property type="match status" value="1"/>
</dbReference>
<dbReference type="InterPro" id="IPR001209">
    <property type="entry name" value="Ribosomal_uS14"/>
</dbReference>
<dbReference type="InterPro" id="IPR023053">
    <property type="entry name" value="Ribosomal_uS14_bact"/>
</dbReference>
<dbReference type="InterPro" id="IPR018271">
    <property type="entry name" value="Ribosomal_uS14_CS"/>
</dbReference>
<dbReference type="InterPro" id="IPR043140">
    <property type="entry name" value="Ribosomal_uS14_sf"/>
</dbReference>
<dbReference type="NCBIfam" id="NF005974">
    <property type="entry name" value="PRK08061.1"/>
    <property type="match status" value="1"/>
</dbReference>
<dbReference type="PANTHER" id="PTHR19836">
    <property type="entry name" value="30S RIBOSOMAL PROTEIN S14"/>
    <property type="match status" value="1"/>
</dbReference>
<dbReference type="PANTHER" id="PTHR19836:SF19">
    <property type="entry name" value="SMALL RIBOSOMAL SUBUNIT PROTEIN US14M"/>
    <property type="match status" value="1"/>
</dbReference>
<dbReference type="Pfam" id="PF00253">
    <property type="entry name" value="Ribosomal_S14"/>
    <property type="match status" value="1"/>
</dbReference>
<dbReference type="SUPFAM" id="SSF57716">
    <property type="entry name" value="Glucocorticoid receptor-like (DNA-binding domain)"/>
    <property type="match status" value="1"/>
</dbReference>
<dbReference type="PROSITE" id="PS00527">
    <property type="entry name" value="RIBOSOMAL_S14"/>
    <property type="match status" value="1"/>
</dbReference>
<gene>
    <name evidence="1" type="primary">rpsZ</name>
    <name evidence="1" type="synonym">rpsN</name>
    <name type="ordered locus">Cla_0072</name>
</gene>
<reference key="1">
    <citation type="journal article" date="2008" name="Foodborne Pathog. Dis.">
        <title>The complete genome sequence and analysis of the human pathogen Campylobacter lari.</title>
        <authorList>
            <person name="Miller W.G."/>
            <person name="Wang G."/>
            <person name="Binnewies T.T."/>
            <person name="Parker C.T."/>
        </authorList>
    </citation>
    <scope>NUCLEOTIDE SEQUENCE [LARGE SCALE GENOMIC DNA]</scope>
    <source>
        <strain>RM2100 / D67 / ATCC BAA-1060</strain>
    </source>
</reference>
<evidence type="ECO:0000255" key="1">
    <source>
        <dbReference type="HAMAP-Rule" id="MF_01364"/>
    </source>
</evidence>
<evidence type="ECO:0000305" key="2"/>
<organism>
    <name type="scientific">Campylobacter lari (strain RM2100 / D67 / ATCC BAA-1060)</name>
    <dbReference type="NCBI Taxonomy" id="306263"/>
    <lineage>
        <taxon>Bacteria</taxon>
        <taxon>Pseudomonadati</taxon>
        <taxon>Campylobacterota</taxon>
        <taxon>Epsilonproteobacteria</taxon>
        <taxon>Campylobacterales</taxon>
        <taxon>Campylobacteraceae</taxon>
        <taxon>Campylobacter</taxon>
    </lineage>
</organism>
<comment type="function">
    <text evidence="1">Binds 16S rRNA, required for the assembly of 30S particles and may also be responsible for determining the conformation of the 16S rRNA at the A site.</text>
</comment>
<comment type="cofactor">
    <cofactor evidence="1">
        <name>Zn(2+)</name>
        <dbReference type="ChEBI" id="CHEBI:29105"/>
    </cofactor>
    <text evidence="1">Binds 1 zinc ion per subunit.</text>
</comment>
<comment type="subunit">
    <text evidence="1">Part of the 30S ribosomal subunit. Contacts proteins S3 and S10.</text>
</comment>
<comment type="similarity">
    <text evidence="1">Belongs to the universal ribosomal protein uS14 family. Zinc-binding uS14 subfamily.</text>
</comment>